<protein>
    <recommendedName>
        <fullName evidence="1">Carbamate kinase</fullName>
        <ecNumber evidence="1">2.7.2.2</ecNumber>
    </recommendedName>
</protein>
<reference key="1">
    <citation type="journal article" date="1995" name="Science">
        <title>Whole-genome random sequencing and assembly of Haemophilus influenzae Rd.</title>
        <authorList>
            <person name="Fleischmann R.D."/>
            <person name="Adams M.D."/>
            <person name="White O."/>
            <person name="Clayton R.A."/>
            <person name="Kirkness E.F."/>
            <person name="Kerlavage A.R."/>
            <person name="Bult C.J."/>
            <person name="Tomb J.-F."/>
            <person name="Dougherty B.A."/>
            <person name="Merrick J.M."/>
            <person name="McKenney K."/>
            <person name="Sutton G.G."/>
            <person name="FitzHugh W."/>
            <person name="Fields C.A."/>
            <person name="Gocayne J.D."/>
            <person name="Scott J.D."/>
            <person name="Shirley R."/>
            <person name="Liu L.-I."/>
            <person name="Glodek A."/>
            <person name="Kelley J.M."/>
            <person name="Weidman J.F."/>
            <person name="Phillips C.A."/>
            <person name="Spriggs T."/>
            <person name="Hedblom E."/>
            <person name="Cotton M.D."/>
            <person name="Utterback T.R."/>
            <person name="Hanna M.C."/>
            <person name="Nguyen D.T."/>
            <person name="Saudek D.M."/>
            <person name="Brandon R.C."/>
            <person name="Fine L.D."/>
            <person name="Fritchman J.L."/>
            <person name="Fuhrmann J.L."/>
            <person name="Geoghagen N.S.M."/>
            <person name="Gnehm C.L."/>
            <person name="McDonald L.A."/>
            <person name="Small K.V."/>
            <person name="Fraser C.M."/>
            <person name="Smith H.O."/>
            <person name="Venter J.C."/>
        </authorList>
    </citation>
    <scope>NUCLEOTIDE SEQUENCE [LARGE SCALE GENOMIC DNA]</scope>
    <source>
        <strain>ATCC 51907 / DSM 11121 / KW20 / Rd</strain>
    </source>
</reference>
<accession>P44769</accession>
<gene>
    <name evidence="3" type="primary">arcC</name>
    <name evidence="3" type="ordered locus">HI_0595</name>
</gene>
<organism>
    <name type="scientific">Haemophilus influenzae (strain ATCC 51907 / DSM 11121 / KW20 / Rd)</name>
    <dbReference type="NCBI Taxonomy" id="71421"/>
    <lineage>
        <taxon>Bacteria</taxon>
        <taxon>Pseudomonadati</taxon>
        <taxon>Pseudomonadota</taxon>
        <taxon>Gammaproteobacteria</taxon>
        <taxon>Pasteurellales</taxon>
        <taxon>Pasteurellaceae</taxon>
        <taxon>Haemophilus</taxon>
    </lineage>
</organism>
<sequence length="310" mass="33440">MRIVIALGGNALLRRGEPMTAENQRQNVRIACEQIAKIWPNNELVIAHGNGPQVGLLALQGAAYTDVPTYPLDVLGAETAGMIGYMIQQELGNLVPFEVPFATLLSQVEVDINDPAFKNPTKPIGPVYTKEEAERLAKEKNWSIAQDGDKYRRVVPSPLPKRIFEIRPVKWLLEKGSIVICAGGGGIPTYYDEHHNLQGVEAVIDKDLCSALLAENLDADLFIIATDVSATFVDWGKPNQKAISVASPEAISELGFASGSMGPKVQAAINFAKQTGKDAVIGSLSDIVDIVKGKAGTRITKKTEGISYYA</sequence>
<proteinExistence type="inferred from homology"/>
<keyword id="KW-0056">Arginine metabolism</keyword>
<keyword id="KW-0067">ATP-binding</keyword>
<keyword id="KW-0963">Cytoplasm</keyword>
<keyword id="KW-0418">Kinase</keyword>
<keyword id="KW-0547">Nucleotide-binding</keyword>
<keyword id="KW-1185">Reference proteome</keyword>
<keyword id="KW-0808">Transferase</keyword>
<name>ARCC_HAEIN</name>
<dbReference type="EC" id="2.7.2.2" evidence="1"/>
<dbReference type="EMBL" id="L42023">
    <property type="protein sequence ID" value="AAC22252.1"/>
    <property type="molecule type" value="Genomic_DNA"/>
</dbReference>
<dbReference type="PIR" id="G64079">
    <property type="entry name" value="G64079"/>
</dbReference>
<dbReference type="RefSeq" id="NP_438752.1">
    <property type="nucleotide sequence ID" value="NC_000907.1"/>
</dbReference>
<dbReference type="SMR" id="P44769"/>
<dbReference type="STRING" id="71421.HI_0595"/>
<dbReference type="EnsemblBacteria" id="AAC22252">
    <property type="protein sequence ID" value="AAC22252"/>
    <property type="gene ID" value="HI_0595"/>
</dbReference>
<dbReference type="KEGG" id="hin:HI_0595"/>
<dbReference type="PATRIC" id="fig|71421.8.peg.616"/>
<dbReference type="eggNOG" id="COG0549">
    <property type="taxonomic scope" value="Bacteria"/>
</dbReference>
<dbReference type="HOGENOM" id="CLU_076278_0_1_6"/>
<dbReference type="OrthoDB" id="9766717at2"/>
<dbReference type="PhylomeDB" id="P44769"/>
<dbReference type="BioCyc" id="HINF71421:G1GJ1-605-MONOMER"/>
<dbReference type="UniPathway" id="UPA00254"/>
<dbReference type="Proteomes" id="UP000000579">
    <property type="component" value="Chromosome"/>
</dbReference>
<dbReference type="GO" id="GO:0005829">
    <property type="term" value="C:cytosol"/>
    <property type="evidence" value="ECO:0000318"/>
    <property type="project" value="GO_Central"/>
</dbReference>
<dbReference type="GO" id="GO:0005524">
    <property type="term" value="F:ATP binding"/>
    <property type="evidence" value="ECO:0007669"/>
    <property type="project" value="UniProtKB-KW"/>
</dbReference>
<dbReference type="GO" id="GO:0008804">
    <property type="term" value="F:carbamate kinase activity"/>
    <property type="evidence" value="ECO:0000318"/>
    <property type="project" value="GO_Central"/>
</dbReference>
<dbReference type="GO" id="GO:0019546">
    <property type="term" value="P:arginine deiminase pathway"/>
    <property type="evidence" value="ECO:0000318"/>
    <property type="project" value="GO_Central"/>
</dbReference>
<dbReference type="CDD" id="cd04235">
    <property type="entry name" value="AAK_CK"/>
    <property type="match status" value="1"/>
</dbReference>
<dbReference type="FunFam" id="3.40.1160.10:FF:000007">
    <property type="entry name" value="Carbamate kinase"/>
    <property type="match status" value="1"/>
</dbReference>
<dbReference type="Gene3D" id="3.40.1160.10">
    <property type="entry name" value="Acetylglutamate kinase-like"/>
    <property type="match status" value="1"/>
</dbReference>
<dbReference type="InterPro" id="IPR036393">
    <property type="entry name" value="AceGlu_kinase-like_sf"/>
</dbReference>
<dbReference type="InterPro" id="IPR001048">
    <property type="entry name" value="Asp/Glu/Uridylate_kinase"/>
</dbReference>
<dbReference type="InterPro" id="IPR003964">
    <property type="entry name" value="Carb_kinase"/>
</dbReference>
<dbReference type="NCBIfam" id="TIGR00746">
    <property type="entry name" value="arcC"/>
    <property type="match status" value="1"/>
</dbReference>
<dbReference type="NCBIfam" id="NF009007">
    <property type="entry name" value="PRK12352.1"/>
    <property type="match status" value="1"/>
</dbReference>
<dbReference type="NCBIfam" id="NF009008">
    <property type="entry name" value="PRK12354.1"/>
    <property type="match status" value="1"/>
</dbReference>
<dbReference type="PANTHER" id="PTHR30409">
    <property type="entry name" value="CARBAMATE KINASE"/>
    <property type="match status" value="1"/>
</dbReference>
<dbReference type="PANTHER" id="PTHR30409:SF1">
    <property type="entry name" value="CARBAMATE KINASE-RELATED"/>
    <property type="match status" value="1"/>
</dbReference>
<dbReference type="Pfam" id="PF00696">
    <property type="entry name" value="AA_kinase"/>
    <property type="match status" value="1"/>
</dbReference>
<dbReference type="PIRSF" id="PIRSF000723">
    <property type="entry name" value="Carbamate_kin"/>
    <property type="match status" value="1"/>
</dbReference>
<dbReference type="PRINTS" id="PR01469">
    <property type="entry name" value="CARBMTKINASE"/>
</dbReference>
<dbReference type="SUPFAM" id="SSF53633">
    <property type="entry name" value="Carbamate kinase-like"/>
    <property type="match status" value="1"/>
</dbReference>
<feature type="chain" id="PRO_0000185125" description="Carbamate kinase">
    <location>
        <begin position="1"/>
        <end position="310"/>
    </location>
</feature>
<evidence type="ECO:0000250" key="1">
    <source>
        <dbReference type="UniProtKB" id="P13982"/>
    </source>
</evidence>
<evidence type="ECO:0000305" key="2"/>
<evidence type="ECO:0000312" key="3">
    <source>
        <dbReference type="EMBL" id="AAC22252.1"/>
    </source>
</evidence>
<comment type="catalytic activity">
    <reaction evidence="1">
        <text>hydrogencarbonate + NH4(+) + ATP = carbamoyl phosphate + ADP + H2O + H(+)</text>
        <dbReference type="Rhea" id="RHEA:10152"/>
        <dbReference type="ChEBI" id="CHEBI:15377"/>
        <dbReference type="ChEBI" id="CHEBI:15378"/>
        <dbReference type="ChEBI" id="CHEBI:17544"/>
        <dbReference type="ChEBI" id="CHEBI:28938"/>
        <dbReference type="ChEBI" id="CHEBI:30616"/>
        <dbReference type="ChEBI" id="CHEBI:58228"/>
        <dbReference type="ChEBI" id="CHEBI:456216"/>
        <dbReference type="EC" id="2.7.2.2"/>
    </reaction>
</comment>
<comment type="pathway">
    <text evidence="1">Amino-acid degradation; L-arginine degradation via ADI pathway.</text>
</comment>
<comment type="subunit">
    <text evidence="1">Homodimer.</text>
</comment>
<comment type="subcellular location">
    <subcellularLocation>
        <location evidence="2">Cytoplasm</location>
    </subcellularLocation>
</comment>
<comment type="similarity">
    <text evidence="2">Belongs to the carbamate kinase family.</text>
</comment>